<keyword id="KW-0094">Blood coagulation</keyword>
<keyword id="KW-0106">Calcium</keyword>
<keyword id="KW-0186">Copper</keyword>
<keyword id="KW-1015">Disulfide bond</keyword>
<keyword id="KW-0325">Glycoprotein</keyword>
<keyword id="KW-0356">Hemostasis</keyword>
<keyword id="KW-0479">Metal-binding</keyword>
<keyword id="KW-0597">Phosphoprotein</keyword>
<keyword id="KW-1185">Reference proteome</keyword>
<keyword id="KW-0677">Repeat</keyword>
<keyword id="KW-0964">Secreted</keyword>
<keyword id="KW-0732">Signal</keyword>
<keyword id="KW-0765">Sulfation</keyword>
<keyword id="KW-0865">Zymogen</keyword>
<comment type="function">
    <text>Central regulator of hemostasis. It serves as a critical cofactor for the prothrombinase activity of factor Xa that results in the activation of prothrombin to thrombin.</text>
</comment>
<comment type="activity regulation">
    <text evidence="1">Inhibited by SERPINA5.</text>
</comment>
<comment type="subunit">
    <text evidence="1">Factor Va, the activated form of factor V, is composed of a heavy chain and a light chain, non-covalently bound. The interaction between the two chains is calcium-dependent. Forms heterodimer with SERPINA5 (By similarity).</text>
</comment>
<comment type="subcellular location">
    <subcellularLocation>
        <location evidence="1">Secreted</location>
    </subcellularLocation>
</comment>
<comment type="domain">
    <text>Domain B contains 32 X 9 AA tandem repeats, and 1 X 17 AA repeats.</text>
</comment>
<comment type="PTM">
    <text evidence="1">Thrombin activates factor V proteolytically to the active cofactor, factor Va (formation of a heavy chain at the N-terminus and a light chain at the C-terminus).</text>
</comment>
<comment type="PTM">
    <text evidence="1">Sulfation is required for efficient thrombin cleavage and activation and for full procoagulant activity.</text>
</comment>
<comment type="PTM">
    <text evidence="1">Activated protein C inactivates factor V and factor Va by proteolytic degradation.</text>
</comment>
<comment type="similarity">
    <text evidence="8">Belongs to the multicopper oxidase family.</text>
</comment>
<comment type="sequence caution" evidence="8">
    <conflict type="erroneous initiation">
        <sequence resource="EMBL-CDS" id="BAE23393"/>
    </conflict>
</comment>
<feature type="signal peptide" evidence="3">
    <location>
        <begin position="1"/>
        <end position="19"/>
    </location>
</feature>
<feature type="chain" id="PRO_0000358718" description="Coagulation factor V">
    <location>
        <begin position="20"/>
        <end position="2183"/>
    </location>
</feature>
<feature type="chain" id="PRO_0000358719" description="Coagulation factor V heavy chain" evidence="1">
    <location>
        <begin position="20"/>
        <end position="736"/>
    </location>
</feature>
<feature type="propeptide" id="PRO_0000358720" description="Activation peptide (connecting region)" evidence="1">
    <location>
        <begin position="737"/>
        <end position="1533"/>
    </location>
</feature>
<feature type="chain" id="PRO_0000358721" description="Coagulation factor V light chain" evidence="1">
    <location>
        <begin position="1534"/>
        <end position="2183"/>
    </location>
</feature>
<feature type="domain" description="F5/8 type A 1">
    <location>
        <begin position="30"/>
        <end position="328"/>
    </location>
</feature>
<feature type="domain" description="Plastocyanin-like 1">
    <location>
        <begin position="30"/>
        <end position="192"/>
    </location>
</feature>
<feature type="domain" description="Plastocyanin-like 2">
    <location>
        <begin position="202"/>
        <end position="328"/>
    </location>
</feature>
<feature type="domain" description="F5/8 type A 2">
    <location>
        <begin position="347"/>
        <end position="682"/>
    </location>
</feature>
<feature type="domain" description="Plastocyanin-like 3">
    <location>
        <begin position="347"/>
        <end position="524"/>
    </location>
</feature>
<feature type="domain" description="Plastocyanin-like 4">
    <location>
        <begin position="534"/>
        <end position="682"/>
    </location>
</feature>
<feature type="repeat" description="1-1">
    <location>
        <begin position="892"/>
        <end position="911"/>
    </location>
</feature>
<feature type="repeat" description="2-1">
    <location>
        <begin position="1175"/>
        <end position="1183"/>
    </location>
</feature>
<feature type="repeat" description="2-2">
    <location>
        <begin position="1184"/>
        <end position="1192"/>
    </location>
</feature>
<feature type="repeat" description="2-3">
    <location>
        <begin position="1193"/>
        <end position="1201"/>
    </location>
</feature>
<feature type="repeat" description="2-4">
    <location>
        <begin position="1202"/>
        <end position="1210"/>
    </location>
</feature>
<feature type="repeat" description="2-5">
    <location>
        <begin position="1211"/>
        <end position="1219"/>
    </location>
</feature>
<feature type="repeat" description="2-6">
    <location>
        <begin position="1220"/>
        <end position="1228"/>
    </location>
</feature>
<feature type="repeat" description="2-7">
    <location>
        <begin position="1229"/>
        <end position="1237"/>
    </location>
</feature>
<feature type="repeat" description="2-8">
    <location>
        <begin position="1238"/>
        <end position="1246"/>
    </location>
</feature>
<feature type="repeat" description="2-9">
    <location>
        <begin position="1247"/>
        <end position="1255"/>
    </location>
</feature>
<feature type="repeat" description="2-10">
    <location>
        <begin position="1256"/>
        <end position="1264"/>
    </location>
</feature>
<feature type="repeat" description="2-11">
    <location>
        <begin position="1265"/>
        <end position="1273"/>
    </location>
</feature>
<feature type="repeat" description="2-12">
    <location>
        <begin position="1274"/>
        <end position="1282"/>
    </location>
</feature>
<feature type="repeat" description="2-13">
    <location>
        <begin position="1283"/>
        <end position="1291"/>
    </location>
</feature>
<feature type="repeat" description="2-14">
    <location>
        <begin position="1292"/>
        <end position="1299"/>
    </location>
</feature>
<feature type="repeat" description="2-15">
    <location>
        <begin position="1300"/>
        <end position="1308"/>
    </location>
</feature>
<feature type="repeat" description="2-16">
    <location>
        <begin position="1309"/>
        <end position="1316"/>
    </location>
</feature>
<feature type="repeat" description="2-17">
    <location>
        <begin position="1317"/>
        <end position="1325"/>
    </location>
</feature>
<feature type="repeat" description="2-18">
    <location>
        <begin position="1326"/>
        <end position="1334"/>
    </location>
</feature>
<feature type="repeat" description="2-19">
    <location>
        <begin position="1335"/>
        <end position="1341"/>
    </location>
</feature>
<feature type="repeat" description="2-20">
    <location>
        <begin position="1342"/>
        <end position="1350"/>
    </location>
</feature>
<feature type="repeat" description="2-21">
    <location>
        <begin position="1351"/>
        <end position="1359"/>
    </location>
</feature>
<feature type="repeat" description="2-22">
    <location>
        <begin position="1360"/>
        <end position="1368"/>
    </location>
</feature>
<feature type="repeat" description="2-23">
    <location>
        <begin position="1369"/>
        <end position="1377"/>
    </location>
</feature>
<feature type="repeat" description="2-24">
    <location>
        <begin position="1378"/>
        <end position="1386"/>
    </location>
</feature>
<feature type="repeat" description="2-25">
    <location>
        <begin position="1387"/>
        <end position="1395"/>
    </location>
</feature>
<feature type="repeat" description="2-26">
    <location>
        <begin position="1396"/>
        <end position="1404"/>
    </location>
</feature>
<feature type="repeat" description="2-27">
    <location>
        <begin position="1405"/>
        <end position="1413"/>
    </location>
</feature>
<feature type="repeat" description="2-28">
    <location>
        <begin position="1414"/>
        <end position="1422"/>
    </location>
</feature>
<feature type="repeat" description="2-29">
    <location>
        <begin position="1423"/>
        <end position="1431"/>
    </location>
</feature>
<feature type="repeat" description="2-30">
    <location>
        <begin position="1432"/>
        <end position="1440"/>
    </location>
</feature>
<feature type="repeat" description="2-31">
    <location>
        <begin position="1441"/>
        <end position="1449"/>
    </location>
</feature>
<feature type="repeat" description="2-32">
    <location>
        <begin position="1452"/>
        <end position="1461"/>
    </location>
</feature>
<feature type="domain" description="F5/8 type A 3">
    <location>
        <begin position="1538"/>
        <end position="1866"/>
    </location>
</feature>
<feature type="domain" description="Plastocyanin-like 5">
    <location>
        <begin position="1538"/>
        <end position="1711"/>
    </location>
</feature>
<feature type="domain" description="Plastocyanin-like 6">
    <location>
        <begin position="1721"/>
        <end position="1866"/>
    </location>
</feature>
<feature type="domain" description="F5/8 type C 1" evidence="4">
    <location>
        <begin position="1866"/>
        <end position="2020"/>
    </location>
</feature>
<feature type="domain" description="F5/8 type C 2" evidence="4">
    <location>
        <begin position="2025"/>
        <end position="2180"/>
    </location>
</feature>
<feature type="region of interest" description="B" evidence="1">
    <location>
        <begin position="691"/>
        <end position="1533"/>
    </location>
</feature>
<feature type="region of interest" description="Disordered" evidence="5">
    <location>
        <begin position="884"/>
        <end position="904"/>
    </location>
</feature>
<feature type="region of interest" description="1 X 17 AA tandem repeats">
    <location>
        <begin position="892"/>
        <end position="908"/>
    </location>
</feature>
<feature type="region of interest" description="Disordered" evidence="5">
    <location>
        <begin position="947"/>
        <end position="1045"/>
    </location>
</feature>
<feature type="region of interest" description="Disordered" evidence="5">
    <location>
        <begin position="1059"/>
        <end position="1144"/>
    </location>
</feature>
<feature type="region of interest" description="32 X 9 AA approximate tandem repeats of [TNP]-L-S-P-D-L-S-Q-T">
    <location>
        <begin position="1175"/>
        <end position="1461"/>
    </location>
</feature>
<feature type="region of interest" description="Disordered" evidence="5">
    <location>
        <begin position="1204"/>
        <end position="1312"/>
    </location>
</feature>
<feature type="region of interest" description="Disordered" evidence="5">
    <location>
        <begin position="1403"/>
        <end position="1462"/>
    </location>
</feature>
<feature type="compositionally biased region" description="Polar residues" evidence="5">
    <location>
        <begin position="951"/>
        <end position="975"/>
    </location>
</feature>
<feature type="compositionally biased region" description="Basic residues" evidence="5">
    <location>
        <begin position="1010"/>
        <end position="1021"/>
    </location>
</feature>
<feature type="compositionally biased region" description="Polar residues" evidence="5">
    <location>
        <begin position="1059"/>
        <end position="1099"/>
    </location>
</feature>
<feature type="compositionally biased region" description="Polar residues" evidence="5">
    <location>
        <begin position="1120"/>
        <end position="1134"/>
    </location>
</feature>
<feature type="compositionally biased region" description="Polar residues" evidence="5">
    <location>
        <begin position="1228"/>
        <end position="1251"/>
    </location>
</feature>
<feature type="compositionally biased region" description="Polar residues" evidence="5">
    <location>
        <begin position="1292"/>
        <end position="1304"/>
    </location>
</feature>
<feature type="binding site" evidence="1">
    <location>
        <position position="138"/>
    </location>
    <ligand>
        <name>Ca(2+)</name>
        <dbReference type="ChEBI" id="CHEBI:29108"/>
    </ligand>
</feature>
<feature type="binding site" evidence="1">
    <location>
        <position position="139"/>
    </location>
    <ligand>
        <name>Ca(2+)</name>
        <dbReference type="ChEBI" id="CHEBI:29108"/>
    </ligand>
</feature>
<feature type="binding site" evidence="1">
    <location>
        <position position="1802"/>
    </location>
    <ligand>
        <name>Cu cation</name>
        <dbReference type="ChEBI" id="CHEBI:23378"/>
    </ligand>
</feature>
<feature type="binding site" evidence="1">
    <location>
        <position position="1804"/>
    </location>
    <ligand>
        <name>Cu cation</name>
        <dbReference type="ChEBI" id="CHEBI:23378"/>
    </ligand>
</feature>
<feature type="site" description="Cleavage; by activated protein C" evidence="1">
    <location>
        <begin position="333"/>
        <end position="334"/>
    </location>
</feature>
<feature type="site" description="Cleavage; by activated protein C" evidence="1">
    <location>
        <begin position="532"/>
        <end position="533"/>
    </location>
</feature>
<feature type="site" description="Cleavage; by activated protein C" evidence="1">
    <location>
        <begin position="706"/>
        <end position="707"/>
    </location>
</feature>
<feature type="site" description="Cleavage; by thrombin" evidence="1">
    <location>
        <begin position="736"/>
        <end position="737"/>
    </location>
</feature>
<feature type="site" description="Cleavage; by activated protein C" evidence="1">
    <location>
        <begin position="1004"/>
        <end position="1005"/>
    </location>
</feature>
<feature type="site" description="Cleavage; by thrombin" evidence="1">
    <location>
        <begin position="1029"/>
        <end position="1030"/>
    </location>
</feature>
<feature type="site" description="Cleavage; by thrombin" evidence="1">
    <location>
        <begin position="1533"/>
        <end position="1534"/>
    </location>
</feature>
<feature type="modified residue" description="Phosphothreonine" evidence="2">
    <location>
        <position position="638"/>
    </location>
</feature>
<feature type="modified residue" description="Sulfotyrosine" evidence="3">
    <location>
        <position position="692"/>
    </location>
</feature>
<feature type="modified residue" description="Sulfotyrosine" evidence="3">
    <location>
        <position position="725"/>
    </location>
</feature>
<feature type="modified residue" description="Phosphoserine" evidence="9">
    <location>
        <position position="903"/>
    </location>
</feature>
<feature type="glycosylation site" description="N-linked (GlcNAc...) asparagine" evidence="3">
    <location>
        <position position="176"/>
    </location>
</feature>
<feature type="glycosylation site" description="N-linked (GlcNAc...) asparagine" evidence="3">
    <location>
        <position position="238"/>
    </location>
</feature>
<feature type="glycosylation site" description="N-linked (GlcNAc...) asparagine" evidence="3">
    <location>
        <position position="381"/>
    </location>
</feature>
<feature type="glycosylation site" description="N-linked (GlcNAc...) asparagine" evidence="6">
    <location>
        <position position="841"/>
    </location>
</feature>
<feature type="glycosylation site" description="N-linked (GlcNAc...) asparagine" evidence="3">
    <location>
        <position position="959"/>
    </location>
</feature>
<feature type="glycosylation site" description="N-linked (GlcNAc...) asparagine" evidence="3">
    <location>
        <position position="972"/>
    </location>
</feature>
<feature type="glycosylation site" description="N-linked (GlcNAc...) asparagine" evidence="3">
    <location>
        <position position="1438"/>
    </location>
</feature>
<feature type="glycosylation site" description="N-linked (GlcNAc...) asparagine" evidence="3">
    <location>
        <position position="1811"/>
    </location>
</feature>
<feature type="disulfide bond" evidence="4">
    <location>
        <begin position="1866"/>
        <end position="2020"/>
    </location>
</feature>
<feature type="disulfide bond" evidence="4">
    <location>
        <begin position="2025"/>
        <end position="2180"/>
    </location>
</feature>
<feature type="mutagenesis site" description="Does not affect pro-coagulant function. Partially resistant to inactivation by activated protein C." evidence="7">
    <original>R</original>
    <variation>Q</variation>
    <location>
        <position position="333"/>
    </location>
</feature>
<feature type="mutagenesis site" description="Does not affect pro-coagulant function. Partially resistant to inactivation by activated protein C." evidence="7">
    <original>R</original>
    <variation>Q</variation>
    <location>
        <position position="532"/>
    </location>
</feature>
<sequence length="2183" mass="247230">MLLVCPCFFLLVVLGTRWAGWGSHQAEAAQLRQFYVAAQGILWNYHPEPTDPSLNSIPSFKKIVYREYEQYFKKEKPRSSNSGLLGPTLYAEVGDVIKVHFRNKADKPLSIHPQGIKYSKFSEGASYADHTFPAERKDDAVAPGEEYTYEWIVSEDSGPTPDDPPCLTHIYYSYENLTQDFNSGLIGPLLICKKGTLTEDGTQKMFDKQHVLLFAVFDESKSRSQSPSLMYTINGFVNKTMPDITVCAHDHVSWHLIGMSSGPELFSIHFNGQVLEQNQHKVSTVTLVSATSTTANMTMSPEGRWIVSSLIPKHYQAGMQAYIDIKNCPKKTRSPKTLTREQRRYMKRWEYFIAAEEVIWNYAPVIPANMDKIYRSQHLDNFSNQIGKHYKKVIYRQYEEETFTKRTDNPSIKQSGILGPVIRAQVRDTLKIVFKNMASRPYSIYPHGVTFSPYEDGINSSSTSGSHTTIRPVQPGETFTYKWNILEFDEPTENDAQCLTRPYYSDVDVTRDIASGLIGLLLICKSRSLDQRGVQRVADIEQQAVFAVFDENKSWYIEDNINKFCENPDEVKRDDPKFYESNIMSTINGYVPESISTLGFCFDDTVQWHFCSVGTHDDILTIHFTGHSFIYGRRHEDTLTLFPMRGESVTVTMDNVGTWMLTTMNSNPKRRNLRLRFRDVKCNRDYDNEDSYEIYEPPAPTSMTTRRIHDSLENEFGIDNEDDDYQYLLASSLGIRSFKNSSLNPEENEFNLTALALENSSEFISPSTDRVVDSNSSRILSKIINNNLKDFQRTLPGSGATVAGTLLRNLIGLDENFVLNSSTEHRSSSYHENDMENPQSNITMVYLLPLGPKGSGNREQDKPKTIKTGRPHMMKHRFSWMKAPAGKTGRHSNPKNSYSGMKSEEDIPSELIPLKQKITSKFLNRRWRVASEKGSYEIIAANGEDTDVDKLTNSPQNQNITVPRGESTSHTNTTRKPSDLPTFSGVGHKSPHVRQEEENSGFQKRQLFIRTRKKKKNKKLALHSPLSPRGFDPLRGHNHSPFPDRRLLNHSLLLHKSNETALSPDLNQTSPSMSTDRSLPDYNQYSKNDTEQMSSSLDLYQSVPAEEHSPTFPAQDPDQTHSTTDPSYRSSPPELSQGLDYDLSHDFYPDDIGLTSFFPDQSQKSSFSSDDDQAIPSSDLSLFTISPELDQTIIYPDLDQLLLSPEDNQKTSSPDLGQVPLSPDDNQKTSSPDLGQVSLSPDDNQKTSSPDLGQVPLSLDDNQKTTSPDLGQVPLSPDDNQMITSPDLGQVPLSSDNQKTSSPDLGQVPLFPEDNQNYFLDLSQVPLSSDQNQETSSTDLLTLSPDFGQTVLSPDLDQLPLPSDNSQVTVSPDLSLLTLSPDFNEIILAPDLGQVTLSPDLIQTNPALNHGHKASSADPDQASYPPDSGQASSLPELNRTLPHPDLTHIPPPSPSPTLNNTSLSRKFNPLVVVGLSRVDGDDVEIVPSEEPERIDEDYAEDDFVTYNDPYRTDTRTDVNSSRNPDTIAAWYLRGHGGHKKFYYIAAEEITWNYAEFAQSEMDHEDTGHTPKDTTYKKVVFRKYLDSTFTSRDPRAEYEEHLGILGPVIRAEVDDVIQVRFKNLASRPYSLHAHGLSYEKSSEGKTYEDESPEWFQEDDAVQPNSSYTYVWHATKRSGPENPGSACRAWAYYSAVNVERDIHSGLIGPLLICRKGTLHMERNLPMDMREFVLLFMVFDEKKSWYYEKSKGSRRIESPEEKNAHKFYAINGMIYNLPGLRMYEQEWVRLHLLNMGGSRDIHVVHFHGQTLLDNRTKQHQLGVWPLLPGSFKTLEMKASKPGWWLLDTEVGENQVAGMQTPFLIIDKECKMPMGLSTGVISDSQIKASEYLTYWEPRLARLNNAGSYNAWSIEKTALDFPIKPWIQVDMQKEVVVTGIQTQGAKHYLKSCFTTEFQVAYSSDQTNWQIFRGKSGKSVMYFTGNSDGSTIKENRLDPPIVARYIRIHPTKSYNRPTLRLELQGCEVNGCSTPLGLEDGRIQDKQITASSFKKSWWGDYWEPSLARLNAQGRVNAWQAKANNNKQWLQVDLLKIKKVTAIVTQGCKSLSSEMYVKSYSIQYSDQGVAWKPYRQKSSMVDKIFEGNSNTKGHMKNFFNPPIISRFIRIIPKTWNQSIALRLELFGCDIY</sequence>
<gene>
    <name type="primary">F5</name>
</gene>
<evidence type="ECO:0000250" key="1"/>
<evidence type="ECO:0000250" key="2">
    <source>
        <dbReference type="UniProtKB" id="P12259"/>
    </source>
</evidence>
<evidence type="ECO:0000255" key="3"/>
<evidence type="ECO:0000255" key="4">
    <source>
        <dbReference type="PROSITE-ProRule" id="PRU00081"/>
    </source>
</evidence>
<evidence type="ECO:0000256" key="5">
    <source>
        <dbReference type="SAM" id="MobiDB-lite"/>
    </source>
</evidence>
<evidence type="ECO:0000269" key="6">
    <source>
    </source>
</evidence>
<evidence type="ECO:0000269" key="7">
    <source>
    </source>
</evidence>
<evidence type="ECO:0000305" key="8"/>
<evidence type="ECO:0007744" key="9">
    <source>
    </source>
</evidence>
<organism>
    <name type="scientific">Mus musculus</name>
    <name type="common">Mouse</name>
    <dbReference type="NCBI Taxonomy" id="10090"/>
    <lineage>
        <taxon>Eukaryota</taxon>
        <taxon>Metazoa</taxon>
        <taxon>Chordata</taxon>
        <taxon>Craniata</taxon>
        <taxon>Vertebrata</taxon>
        <taxon>Euteleostomi</taxon>
        <taxon>Mammalia</taxon>
        <taxon>Eutheria</taxon>
        <taxon>Euarchontoglires</taxon>
        <taxon>Glires</taxon>
        <taxon>Rodentia</taxon>
        <taxon>Myomorpha</taxon>
        <taxon>Muroidea</taxon>
        <taxon>Muridae</taxon>
        <taxon>Murinae</taxon>
        <taxon>Mus</taxon>
        <taxon>Mus</taxon>
    </lineage>
</organism>
<reference key="1">
    <citation type="journal article" date="1998" name="Blood">
        <title>The structure and function of murine factor V and its inactivation by protein C.</title>
        <authorList>
            <person name="Yang T.L."/>
            <person name="Cui J."/>
            <person name="Rehumtulla A."/>
            <person name="Yang A."/>
            <person name="Moussalli M."/>
            <person name="Kaufman R.J."/>
            <person name="Ginsburg D."/>
        </authorList>
    </citation>
    <scope>NUCLEOTIDE SEQUENCE [MRNA]</scope>
    <scope>CLEAVAGE BY ACTIVATED PROTEIN C</scope>
    <scope>MUTAGENESIS OF ARG-333 AND ARG-532</scope>
    <source>
        <strain>C57BL/6J</strain>
        <tissue>Bone marrow</tissue>
    </source>
</reference>
<reference key="2">
    <citation type="journal article" date="2005" name="Science">
        <title>The transcriptional landscape of the mammalian genome.</title>
        <authorList>
            <person name="Carninci P."/>
            <person name="Kasukawa T."/>
            <person name="Katayama S."/>
            <person name="Gough J."/>
            <person name="Frith M.C."/>
            <person name="Maeda N."/>
            <person name="Oyama R."/>
            <person name="Ravasi T."/>
            <person name="Lenhard B."/>
            <person name="Wells C."/>
            <person name="Kodzius R."/>
            <person name="Shimokawa K."/>
            <person name="Bajic V.B."/>
            <person name="Brenner S.E."/>
            <person name="Batalov S."/>
            <person name="Forrest A.R."/>
            <person name="Zavolan M."/>
            <person name="Davis M.J."/>
            <person name="Wilming L.G."/>
            <person name="Aidinis V."/>
            <person name="Allen J.E."/>
            <person name="Ambesi-Impiombato A."/>
            <person name="Apweiler R."/>
            <person name="Aturaliya R.N."/>
            <person name="Bailey T.L."/>
            <person name="Bansal M."/>
            <person name="Baxter L."/>
            <person name="Beisel K.W."/>
            <person name="Bersano T."/>
            <person name="Bono H."/>
            <person name="Chalk A.M."/>
            <person name="Chiu K.P."/>
            <person name="Choudhary V."/>
            <person name="Christoffels A."/>
            <person name="Clutterbuck D.R."/>
            <person name="Crowe M.L."/>
            <person name="Dalla E."/>
            <person name="Dalrymple B.P."/>
            <person name="de Bono B."/>
            <person name="Della Gatta G."/>
            <person name="di Bernardo D."/>
            <person name="Down T."/>
            <person name="Engstrom P."/>
            <person name="Fagiolini M."/>
            <person name="Faulkner G."/>
            <person name="Fletcher C.F."/>
            <person name="Fukushima T."/>
            <person name="Furuno M."/>
            <person name="Futaki S."/>
            <person name="Gariboldi M."/>
            <person name="Georgii-Hemming P."/>
            <person name="Gingeras T.R."/>
            <person name="Gojobori T."/>
            <person name="Green R.E."/>
            <person name="Gustincich S."/>
            <person name="Harbers M."/>
            <person name="Hayashi Y."/>
            <person name="Hensch T.K."/>
            <person name="Hirokawa N."/>
            <person name="Hill D."/>
            <person name="Huminiecki L."/>
            <person name="Iacono M."/>
            <person name="Ikeo K."/>
            <person name="Iwama A."/>
            <person name="Ishikawa T."/>
            <person name="Jakt M."/>
            <person name="Kanapin A."/>
            <person name="Katoh M."/>
            <person name="Kawasawa Y."/>
            <person name="Kelso J."/>
            <person name="Kitamura H."/>
            <person name="Kitano H."/>
            <person name="Kollias G."/>
            <person name="Krishnan S.P."/>
            <person name="Kruger A."/>
            <person name="Kummerfeld S.K."/>
            <person name="Kurochkin I.V."/>
            <person name="Lareau L.F."/>
            <person name="Lazarevic D."/>
            <person name="Lipovich L."/>
            <person name="Liu J."/>
            <person name="Liuni S."/>
            <person name="McWilliam S."/>
            <person name="Madan Babu M."/>
            <person name="Madera M."/>
            <person name="Marchionni L."/>
            <person name="Matsuda H."/>
            <person name="Matsuzawa S."/>
            <person name="Miki H."/>
            <person name="Mignone F."/>
            <person name="Miyake S."/>
            <person name="Morris K."/>
            <person name="Mottagui-Tabar S."/>
            <person name="Mulder N."/>
            <person name="Nakano N."/>
            <person name="Nakauchi H."/>
            <person name="Ng P."/>
            <person name="Nilsson R."/>
            <person name="Nishiguchi S."/>
            <person name="Nishikawa S."/>
            <person name="Nori F."/>
            <person name="Ohara O."/>
            <person name="Okazaki Y."/>
            <person name="Orlando V."/>
            <person name="Pang K.C."/>
            <person name="Pavan W.J."/>
            <person name="Pavesi G."/>
            <person name="Pesole G."/>
            <person name="Petrovsky N."/>
            <person name="Piazza S."/>
            <person name="Reed J."/>
            <person name="Reid J.F."/>
            <person name="Ring B.Z."/>
            <person name="Ringwald M."/>
            <person name="Rost B."/>
            <person name="Ruan Y."/>
            <person name="Salzberg S.L."/>
            <person name="Sandelin A."/>
            <person name="Schneider C."/>
            <person name="Schoenbach C."/>
            <person name="Sekiguchi K."/>
            <person name="Semple C.A."/>
            <person name="Seno S."/>
            <person name="Sessa L."/>
            <person name="Sheng Y."/>
            <person name="Shibata Y."/>
            <person name="Shimada H."/>
            <person name="Shimada K."/>
            <person name="Silva D."/>
            <person name="Sinclair B."/>
            <person name="Sperling S."/>
            <person name="Stupka E."/>
            <person name="Sugiura K."/>
            <person name="Sultana R."/>
            <person name="Takenaka Y."/>
            <person name="Taki K."/>
            <person name="Tammoja K."/>
            <person name="Tan S.L."/>
            <person name="Tang S."/>
            <person name="Taylor M.S."/>
            <person name="Tegner J."/>
            <person name="Teichmann S.A."/>
            <person name="Ueda H.R."/>
            <person name="van Nimwegen E."/>
            <person name="Verardo R."/>
            <person name="Wei C.L."/>
            <person name="Yagi K."/>
            <person name="Yamanishi H."/>
            <person name="Zabarovsky E."/>
            <person name="Zhu S."/>
            <person name="Zimmer A."/>
            <person name="Hide W."/>
            <person name="Bult C."/>
            <person name="Grimmond S.M."/>
            <person name="Teasdale R.D."/>
            <person name="Liu E.T."/>
            <person name="Brusic V."/>
            <person name="Quackenbush J."/>
            <person name="Wahlestedt C."/>
            <person name="Mattick J.S."/>
            <person name="Hume D.A."/>
            <person name="Kai C."/>
            <person name="Sasaki D."/>
            <person name="Tomaru Y."/>
            <person name="Fukuda S."/>
            <person name="Kanamori-Katayama M."/>
            <person name="Suzuki M."/>
            <person name="Aoki J."/>
            <person name="Arakawa T."/>
            <person name="Iida J."/>
            <person name="Imamura K."/>
            <person name="Itoh M."/>
            <person name="Kato T."/>
            <person name="Kawaji H."/>
            <person name="Kawagashira N."/>
            <person name="Kawashima T."/>
            <person name="Kojima M."/>
            <person name="Kondo S."/>
            <person name="Konno H."/>
            <person name="Nakano K."/>
            <person name="Ninomiya N."/>
            <person name="Nishio T."/>
            <person name="Okada M."/>
            <person name="Plessy C."/>
            <person name="Shibata K."/>
            <person name="Shiraki T."/>
            <person name="Suzuki S."/>
            <person name="Tagami M."/>
            <person name="Waki K."/>
            <person name="Watahiki A."/>
            <person name="Okamura-Oho Y."/>
            <person name="Suzuki H."/>
            <person name="Kawai J."/>
            <person name="Hayashizaki Y."/>
        </authorList>
    </citation>
    <scope>NUCLEOTIDE SEQUENCE [LARGE SCALE MRNA] OF 1-1012</scope>
    <source>
        <strain>C57BL/6J</strain>
        <tissue>Bone</tissue>
        <tissue>Cerebellum</tissue>
        <tissue>Olfactory bulb</tissue>
    </source>
</reference>
<reference key="3">
    <citation type="journal article" date="2006" name="J. Proteome Res.">
        <title>Proteome-wide characterization of N-glycosylation events by diagonal chromatography.</title>
        <authorList>
            <person name="Ghesquiere B."/>
            <person name="Van Damme J."/>
            <person name="Martens L."/>
            <person name="Vandekerckhove J."/>
            <person name="Gevaert K."/>
        </authorList>
    </citation>
    <scope>GLYCOSYLATION [LARGE SCALE ANALYSIS] AT ASN-841</scope>
    <source>
        <strain>C57BL/6J</strain>
        <tissue>Plasma</tissue>
    </source>
</reference>
<reference key="4">
    <citation type="journal article" date="2010" name="Cell">
        <title>A tissue-specific atlas of mouse protein phosphorylation and expression.</title>
        <authorList>
            <person name="Huttlin E.L."/>
            <person name="Jedrychowski M.P."/>
            <person name="Elias J.E."/>
            <person name="Goswami T."/>
            <person name="Rad R."/>
            <person name="Beausoleil S.A."/>
            <person name="Villen J."/>
            <person name="Haas W."/>
            <person name="Sowa M.E."/>
            <person name="Gygi S.P."/>
        </authorList>
    </citation>
    <scope>PHOSPHORYLATION [LARGE SCALE ANALYSIS] AT SER-903</scope>
    <scope>IDENTIFICATION BY MASS SPECTROMETRY [LARGE SCALE ANALYSIS]</scope>
    <source>
        <tissue>Brown adipose tissue</tissue>
        <tissue>Heart</tissue>
        <tissue>Kidney</tissue>
        <tissue>Liver</tissue>
        <tissue>Lung</tissue>
        <tissue>Spleen</tissue>
    </source>
</reference>
<proteinExistence type="evidence at protein level"/>
<protein>
    <recommendedName>
        <fullName>Coagulation factor V</fullName>
    </recommendedName>
    <alternativeName>
        <fullName>Activated protein C cofactor</fullName>
    </alternativeName>
    <component>
        <recommendedName>
            <fullName>Coagulation factor V heavy chain</fullName>
        </recommendedName>
    </component>
    <component>
        <recommendedName>
            <fullName>Coagulation factor V light chain</fullName>
        </recommendedName>
    </component>
</protein>
<accession>O88783</accession>
<accession>Q3UTQ2</accession>
<accession>Q3UV80</accession>
<dbReference type="EMBL" id="U52925">
    <property type="protein sequence ID" value="AAC99553.1"/>
    <property type="molecule type" value="mRNA"/>
</dbReference>
<dbReference type="EMBL" id="AK137521">
    <property type="protein sequence ID" value="BAE23393.1"/>
    <property type="status" value="ALT_INIT"/>
    <property type="molecule type" value="mRNA"/>
</dbReference>
<dbReference type="EMBL" id="AK139240">
    <property type="protein sequence ID" value="BAE23928.1"/>
    <property type="molecule type" value="mRNA"/>
</dbReference>
<dbReference type="CCDS" id="CCDS35754.1"/>
<dbReference type="PIR" id="T42764">
    <property type="entry name" value="T42764"/>
</dbReference>
<dbReference type="RefSeq" id="NP_032002.1">
    <property type="nucleotide sequence ID" value="NM_007976.4"/>
</dbReference>
<dbReference type="SMR" id="O88783"/>
<dbReference type="BioGRID" id="199574">
    <property type="interactions" value="4"/>
</dbReference>
<dbReference type="FunCoup" id="O88783">
    <property type="interactions" value="302"/>
</dbReference>
<dbReference type="IntAct" id="O88783">
    <property type="interactions" value="2"/>
</dbReference>
<dbReference type="MINT" id="O88783"/>
<dbReference type="STRING" id="10090.ENSMUSP00000083204"/>
<dbReference type="GlyCosmos" id="O88783">
    <property type="glycosylation" value="8 sites, No reported glycans"/>
</dbReference>
<dbReference type="GlyGen" id="O88783">
    <property type="glycosylation" value="18 sites, 6 N-linked glycans (11 sites), 1 O-linked glycan (1 site)"/>
</dbReference>
<dbReference type="iPTMnet" id="O88783"/>
<dbReference type="PhosphoSitePlus" id="O88783"/>
<dbReference type="PaxDb" id="10090-ENSMUSP00000083204"/>
<dbReference type="PeptideAtlas" id="O88783"/>
<dbReference type="ProteomicsDB" id="266826"/>
<dbReference type="Antibodypedia" id="863">
    <property type="antibodies" value="404 antibodies from 33 providers"/>
</dbReference>
<dbReference type="DNASU" id="14067"/>
<dbReference type="Ensembl" id="ENSMUST00000086040.6">
    <property type="protein sequence ID" value="ENSMUSP00000083204.6"/>
    <property type="gene ID" value="ENSMUSG00000026579.9"/>
</dbReference>
<dbReference type="GeneID" id="14067"/>
<dbReference type="KEGG" id="mmu:14067"/>
<dbReference type="UCSC" id="uc007dic.1">
    <property type="organism name" value="mouse"/>
</dbReference>
<dbReference type="AGR" id="MGI:88382"/>
<dbReference type="CTD" id="2153"/>
<dbReference type="MGI" id="MGI:88382">
    <property type="gene designation" value="F5"/>
</dbReference>
<dbReference type="VEuPathDB" id="HostDB:ENSMUSG00000026579"/>
<dbReference type="eggNOG" id="ENOG502QSUG">
    <property type="taxonomic scope" value="Eukaryota"/>
</dbReference>
<dbReference type="GeneTree" id="ENSGT00940000158556"/>
<dbReference type="HOGENOM" id="CLU_000948_0_0_1"/>
<dbReference type="InParanoid" id="O88783"/>
<dbReference type="OMA" id="YQSNIMS"/>
<dbReference type="OrthoDB" id="2121828at2759"/>
<dbReference type="PhylomeDB" id="O88783"/>
<dbReference type="TreeFam" id="TF329807"/>
<dbReference type="Reactome" id="R-MMU-114608">
    <property type="pathway name" value="Platelet degranulation"/>
</dbReference>
<dbReference type="Reactome" id="R-MMU-140875">
    <property type="pathway name" value="Common Pathway of Fibrin Clot Formation"/>
</dbReference>
<dbReference type="Reactome" id="R-MMU-204005">
    <property type="pathway name" value="COPII-mediated vesicle transport"/>
</dbReference>
<dbReference type="Reactome" id="R-MMU-381426">
    <property type="pathway name" value="Regulation of Insulin-like Growth Factor (IGF) transport and uptake by Insulin-like Growth Factor Binding Proteins (IGFBPs)"/>
</dbReference>
<dbReference type="Reactome" id="R-MMU-5694530">
    <property type="pathway name" value="Cargo concentration in the ER"/>
</dbReference>
<dbReference type="Reactome" id="R-MMU-8957275">
    <property type="pathway name" value="Post-translational protein phosphorylation"/>
</dbReference>
<dbReference type="BioGRID-ORCS" id="14067">
    <property type="hits" value="1 hit in 63 CRISPR screens"/>
</dbReference>
<dbReference type="ChiTaRS" id="F5">
    <property type="organism name" value="mouse"/>
</dbReference>
<dbReference type="PRO" id="PR:O88783"/>
<dbReference type="Proteomes" id="UP000000589">
    <property type="component" value="Chromosome 1"/>
</dbReference>
<dbReference type="RNAct" id="O88783">
    <property type="molecule type" value="protein"/>
</dbReference>
<dbReference type="Bgee" id="ENSMUSG00000026579">
    <property type="expression patterns" value="Expressed in choroid plexus epithelium and 96 other cell types or tissues"/>
</dbReference>
<dbReference type="GO" id="GO:0005615">
    <property type="term" value="C:extracellular space"/>
    <property type="evidence" value="ECO:0000314"/>
    <property type="project" value="MGI"/>
</dbReference>
<dbReference type="GO" id="GO:0031091">
    <property type="term" value="C:platelet alpha granule"/>
    <property type="evidence" value="ECO:0000314"/>
    <property type="project" value="MGI"/>
</dbReference>
<dbReference type="GO" id="GO:0005507">
    <property type="term" value="F:copper ion binding"/>
    <property type="evidence" value="ECO:0007669"/>
    <property type="project" value="InterPro"/>
</dbReference>
<dbReference type="GO" id="GO:0008015">
    <property type="term" value="P:blood circulation"/>
    <property type="evidence" value="ECO:0000315"/>
    <property type="project" value="MGI"/>
</dbReference>
<dbReference type="GO" id="GO:0007596">
    <property type="term" value="P:blood coagulation"/>
    <property type="evidence" value="ECO:0000314"/>
    <property type="project" value="MGI"/>
</dbReference>
<dbReference type="GO" id="GO:0032571">
    <property type="term" value="P:response to vitamin K"/>
    <property type="evidence" value="ECO:0007669"/>
    <property type="project" value="Ensembl"/>
</dbReference>
<dbReference type="CDD" id="cd14450">
    <property type="entry name" value="CuRO_3_FV_like"/>
    <property type="match status" value="1"/>
</dbReference>
<dbReference type="CDD" id="cd14454">
    <property type="entry name" value="CuRO_4_FV_like"/>
    <property type="match status" value="1"/>
</dbReference>
<dbReference type="CDD" id="cd00057">
    <property type="entry name" value="FA58C"/>
    <property type="match status" value="2"/>
</dbReference>
<dbReference type="FunFam" id="2.60.40.420:FF:000056">
    <property type="entry name" value="Coagulation factor V"/>
    <property type="match status" value="1"/>
</dbReference>
<dbReference type="FunFam" id="2.60.40.420:FF:000050">
    <property type="entry name" value="coagulation factor V isoform X1"/>
    <property type="match status" value="1"/>
</dbReference>
<dbReference type="FunFam" id="2.60.40.420:FF:000068">
    <property type="entry name" value="coagulation factor V isoform X1"/>
    <property type="match status" value="1"/>
</dbReference>
<dbReference type="FunFam" id="2.60.120.260:FF:000002">
    <property type="entry name" value="Coagulation factor VIII"/>
    <property type="match status" value="2"/>
</dbReference>
<dbReference type="FunFam" id="2.60.40.420:FF:000011">
    <property type="entry name" value="Coagulation factor VIII (Predicted)"/>
    <property type="match status" value="2"/>
</dbReference>
<dbReference type="Gene3D" id="2.60.40.420">
    <property type="entry name" value="Cupredoxins - blue copper proteins"/>
    <property type="match status" value="5"/>
</dbReference>
<dbReference type="Gene3D" id="2.60.120.260">
    <property type="entry name" value="Galactose-binding domain-like"/>
    <property type="match status" value="2"/>
</dbReference>
<dbReference type="InterPro" id="IPR011707">
    <property type="entry name" value="Cu-oxidase-like_N"/>
</dbReference>
<dbReference type="InterPro" id="IPR033138">
    <property type="entry name" value="Cu_oxidase_CS"/>
</dbReference>
<dbReference type="InterPro" id="IPR008972">
    <property type="entry name" value="Cupredoxin"/>
</dbReference>
<dbReference type="InterPro" id="IPR000421">
    <property type="entry name" value="FA58C"/>
</dbReference>
<dbReference type="InterPro" id="IPR024715">
    <property type="entry name" value="Factor_5/8-like"/>
</dbReference>
<dbReference type="InterPro" id="IPR008979">
    <property type="entry name" value="Galactose-bd-like_sf"/>
</dbReference>
<dbReference type="InterPro" id="IPR050633">
    <property type="entry name" value="Neuropilin_MCO_CoagFactor"/>
</dbReference>
<dbReference type="PANTHER" id="PTHR46806:SF10">
    <property type="entry name" value="COAGULATION FACTOR V"/>
    <property type="match status" value="1"/>
</dbReference>
<dbReference type="PANTHER" id="PTHR46806">
    <property type="entry name" value="F5/8 TYPE C DOMAIN-CONTAINING PROTEIN"/>
    <property type="match status" value="1"/>
</dbReference>
<dbReference type="Pfam" id="PF07732">
    <property type="entry name" value="Cu-oxidase_3"/>
    <property type="match status" value="3"/>
</dbReference>
<dbReference type="Pfam" id="PF00754">
    <property type="entry name" value="F5_F8_type_C"/>
    <property type="match status" value="2"/>
</dbReference>
<dbReference type="PIRSF" id="PIRSF000354">
    <property type="entry name" value="Factors_V_VIII"/>
    <property type="match status" value="1"/>
</dbReference>
<dbReference type="SMART" id="SM00231">
    <property type="entry name" value="FA58C"/>
    <property type="match status" value="2"/>
</dbReference>
<dbReference type="SUPFAM" id="SSF49503">
    <property type="entry name" value="Cupredoxins"/>
    <property type="match status" value="6"/>
</dbReference>
<dbReference type="SUPFAM" id="SSF49785">
    <property type="entry name" value="Galactose-binding domain-like"/>
    <property type="match status" value="2"/>
</dbReference>
<dbReference type="PROSITE" id="PS01285">
    <property type="entry name" value="FA58C_1"/>
    <property type="match status" value="2"/>
</dbReference>
<dbReference type="PROSITE" id="PS01286">
    <property type="entry name" value="FA58C_2"/>
    <property type="match status" value="2"/>
</dbReference>
<dbReference type="PROSITE" id="PS50022">
    <property type="entry name" value="FA58C_3"/>
    <property type="match status" value="2"/>
</dbReference>
<dbReference type="PROSITE" id="PS00079">
    <property type="entry name" value="MULTICOPPER_OXIDASE1"/>
    <property type="match status" value="2"/>
</dbReference>
<name>FA5_MOUSE</name>